<comment type="function">
    <text evidence="1">Bidirectionally degrades single-stranded DNA into large acid-insoluble oligonucleotides, which are then degraded further into small acid-soluble oligonucleotides.</text>
</comment>
<comment type="catalytic activity">
    <reaction evidence="1">
        <text>Exonucleolytic cleavage in either 5'- to 3'- or 3'- to 5'-direction to yield nucleoside 5'-phosphates.</text>
        <dbReference type="EC" id="3.1.11.6"/>
    </reaction>
</comment>
<comment type="subunit">
    <text evidence="1">Heterooligomer composed of large and small subunits.</text>
</comment>
<comment type="subcellular location">
    <subcellularLocation>
        <location evidence="1">Cytoplasm</location>
    </subcellularLocation>
</comment>
<comment type="similarity">
    <text evidence="1">Belongs to the XseB family.</text>
</comment>
<gene>
    <name evidence="1" type="primary">xseB</name>
    <name type="ordered locus">ECED1_0445</name>
</gene>
<sequence>MPKKNEAPASFEKALSELEQIVTRLESGDLPLEEALNEFERGVQLARQGQAKLQQAEQRVQILLSDNEDASLTPFTPDNE</sequence>
<feature type="chain" id="PRO_1000200252" description="Exodeoxyribonuclease 7 small subunit">
    <location>
        <begin position="1"/>
        <end position="80"/>
    </location>
</feature>
<evidence type="ECO:0000255" key="1">
    <source>
        <dbReference type="HAMAP-Rule" id="MF_00337"/>
    </source>
</evidence>
<accession>B7MQD7</accession>
<keyword id="KW-0963">Cytoplasm</keyword>
<keyword id="KW-0269">Exonuclease</keyword>
<keyword id="KW-0378">Hydrolase</keyword>
<keyword id="KW-0540">Nuclease</keyword>
<name>EX7S_ECO81</name>
<proteinExistence type="inferred from homology"/>
<organism>
    <name type="scientific">Escherichia coli O81 (strain ED1a)</name>
    <dbReference type="NCBI Taxonomy" id="585397"/>
    <lineage>
        <taxon>Bacteria</taxon>
        <taxon>Pseudomonadati</taxon>
        <taxon>Pseudomonadota</taxon>
        <taxon>Gammaproteobacteria</taxon>
        <taxon>Enterobacterales</taxon>
        <taxon>Enterobacteriaceae</taxon>
        <taxon>Escherichia</taxon>
    </lineage>
</organism>
<dbReference type="EC" id="3.1.11.6" evidence="1"/>
<dbReference type="EMBL" id="CU928162">
    <property type="protein sequence ID" value="CAR06655.1"/>
    <property type="molecule type" value="Genomic_DNA"/>
</dbReference>
<dbReference type="RefSeq" id="WP_001124935.1">
    <property type="nucleotide sequence ID" value="NC_011745.1"/>
</dbReference>
<dbReference type="SMR" id="B7MQD7"/>
<dbReference type="GeneID" id="75202844"/>
<dbReference type="KEGG" id="ecq:ECED1_0445"/>
<dbReference type="HOGENOM" id="CLU_145918_3_3_6"/>
<dbReference type="Proteomes" id="UP000000748">
    <property type="component" value="Chromosome"/>
</dbReference>
<dbReference type="GO" id="GO:0005829">
    <property type="term" value="C:cytosol"/>
    <property type="evidence" value="ECO:0007669"/>
    <property type="project" value="TreeGrafter"/>
</dbReference>
<dbReference type="GO" id="GO:0009318">
    <property type="term" value="C:exodeoxyribonuclease VII complex"/>
    <property type="evidence" value="ECO:0007669"/>
    <property type="project" value="InterPro"/>
</dbReference>
<dbReference type="GO" id="GO:0008855">
    <property type="term" value="F:exodeoxyribonuclease VII activity"/>
    <property type="evidence" value="ECO:0007669"/>
    <property type="project" value="UniProtKB-UniRule"/>
</dbReference>
<dbReference type="GO" id="GO:0006308">
    <property type="term" value="P:DNA catabolic process"/>
    <property type="evidence" value="ECO:0007669"/>
    <property type="project" value="UniProtKB-UniRule"/>
</dbReference>
<dbReference type="FunFam" id="1.10.287.1040:FF:000001">
    <property type="entry name" value="Exodeoxyribonuclease 7 small subunit"/>
    <property type="match status" value="1"/>
</dbReference>
<dbReference type="Gene3D" id="1.10.287.1040">
    <property type="entry name" value="Exonuclease VII, small subunit"/>
    <property type="match status" value="1"/>
</dbReference>
<dbReference type="HAMAP" id="MF_00337">
    <property type="entry name" value="Exonuc_7_S"/>
    <property type="match status" value="1"/>
</dbReference>
<dbReference type="InterPro" id="IPR003761">
    <property type="entry name" value="Exonuc_VII_S"/>
</dbReference>
<dbReference type="InterPro" id="IPR037004">
    <property type="entry name" value="Exonuc_VII_ssu_sf"/>
</dbReference>
<dbReference type="NCBIfam" id="NF002137">
    <property type="entry name" value="PRK00977.1-1"/>
    <property type="match status" value="1"/>
</dbReference>
<dbReference type="NCBIfam" id="NF002140">
    <property type="entry name" value="PRK00977.1-4"/>
    <property type="match status" value="1"/>
</dbReference>
<dbReference type="NCBIfam" id="TIGR01280">
    <property type="entry name" value="xseB"/>
    <property type="match status" value="1"/>
</dbReference>
<dbReference type="PANTHER" id="PTHR34137">
    <property type="entry name" value="EXODEOXYRIBONUCLEASE 7 SMALL SUBUNIT"/>
    <property type="match status" value="1"/>
</dbReference>
<dbReference type="PANTHER" id="PTHR34137:SF1">
    <property type="entry name" value="EXODEOXYRIBONUCLEASE 7 SMALL SUBUNIT"/>
    <property type="match status" value="1"/>
</dbReference>
<dbReference type="Pfam" id="PF02609">
    <property type="entry name" value="Exonuc_VII_S"/>
    <property type="match status" value="1"/>
</dbReference>
<dbReference type="PIRSF" id="PIRSF006488">
    <property type="entry name" value="Exonuc_VII_S"/>
    <property type="match status" value="1"/>
</dbReference>
<dbReference type="SUPFAM" id="SSF116842">
    <property type="entry name" value="XseB-like"/>
    <property type="match status" value="1"/>
</dbReference>
<reference key="1">
    <citation type="journal article" date="2009" name="PLoS Genet.">
        <title>Organised genome dynamics in the Escherichia coli species results in highly diverse adaptive paths.</title>
        <authorList>
            <person name="Touchon M."/>
            <person name="Hoede C."/>
            <person name="Tenaillon O."/>
            <person name="Barbe V."/>
            <person name="Baeriswyl S."/>
            <person name="Bidet P."/>
            <person name="Bingen E."/>
            <person name="Bonacorsi S."/>
            <person name="Bouchier C."/>
            <person name="Bouvet O."/>
            <person name="Calteau A."/>
            <person name="Chiapello H."/>
            <person name="Clermont O."/>
            <person name="Cruveiller S."/>
            <person name="Danchin A."/>
            <person name="Diard M."/>
            <person name="Dossat C."/>
            <person name="Karoui M.E."/>
            <person name="Frapy E."/>
            <person name="Garry L."/>
            <person name="Ghigo J.M."/>
            <person name="Gilles A.M."/>
            <person name="Johnson J."/>
            <person name="Le Bouguenec C."/>
            <person name="Lescat M."/>
            <person name="Mangenot S."/>
            <person name="Martinez-Jehanne V."/>
            <person name="Matic I."/>
            <person name="Nassif X."/>
            <person name="Oztas S."/>
            <person name="Petit M.A."/>
            <person name="Pichon C."/>
            <person name="Rouy Z."/>
            <person name="Ruf C.S."/>
            <person name="Schneider D."/>
            <person name="Tourret J."/>
            <person name="Vacherie B."/>
            <person name="Vallenet D."/>
            <person name="Medigue C."/>
            <person name="Rocha E.P.C."/>
            <person name="Denamur E."/>
        </authorList>
    </citation>
    <scope>NUCLEOTIDE SEQUENCE [LARGE SCALE GENOMIC DNA]</scope>
    <source>
        <strain>ED1a</strain>
    </source>
</reference>
<protein>
    <recommendedName>
        <fullName evidence="1">Exodeoxyribonuclease 7 small subunit</fullName>
        <ecNumber evidence="1">3.1.11.6</ecNumber>
    </recommendedName>
    <alternativeName>
        <fullName evidence="1">Exodeoxyribonuclease VII small subunit</fullName>
        <shortName evidence="1">Exonuclease VII small subunit</shortName>
    </alternativeName>
</protein>